<keyword id="KW-0418">Kinase</keyword>
<keyword id="KW-0547">Nucleotide-binding</keyword>
<keyword id="KW-0723">Serine/threonine-protein kinase</keyword>
<keyword id="KW-0808">Transferase</keyword>
<gene>
    <name type="ordered locus">PFL_1868</name>
</gene>
<evidence type="ECO:0000255" key="1">
    <source>
        <dbReference type="HAMAP-Rule" id="MF_01062"/>
    </source>
</evidence>
<accession>Q4KFJ6</accession>
<name>PSRP_PSEF5</name>
<feature type="chain" id="PRO_0000196690" description="Putative phosphoenolpyruvate synthase regulatory protein">
    <location>
        <begin position="1"/>
        <end position="272"/>
    </location>
</feature>
<feature type="binding site" evidence="1">
    <location>
        <begin position="152"/>
        <end position="159"/>
    </location>
    <ligand>
        <name>ADP</name>
        <dbReference type="ChEBI" id="CHEBI:456216"/>
    </ligand>
</feature>
<comment type="function">
    <text evidence="1">Bifunctional serine/threonine kinase and phosphorylase involved in the regulation of the phosphoenolpyruvate synthase (PEPS) by catalyzing its phosphorylation/dephosphorylation.</text>
</comment>
<comment type="catalytic activity">
    <reaction evidence="1">
        <text>[pyruvate, water dikinase] + ADP = [pyruvate, water dikinase]-phosphate + AMP + H(+)</text>
        <dbReference type="Rhea" id="RHEA:46020"/>
        <dbReference type="Rhea" id="RHEA-COMP:11425"/>
        <dbReference type="Rhea" id="RHEA-COMP:11426"/>
        <dbReference type="ChEBI" id="CHEBI:15378"/>
        <dbReference type="ChEBI" id="CHEBI:43176"/>
        <dbReference type="ChEBI" id="CHEBI:68546"/>
        <dbReference type="ChEBI" id="CHEBI:456215"/>
        <dbReference type="ChEBI" id="CHEBI:456216"/>
        <dbReference type="EC" id="2.7.11.33"/>
    </reaction>
</comment>
<comment type="catalytic activity">
    <reaction evidence="1">
        <text>[pyruvate, water dikinase]-phosphate + phosphate + H(+) = [pyruvate, water dikinase] + diphosphate</text>
        <dbReference type="Rhea" id="RHEA:48580"/>
        <dbReference type="Rhea" id="RHEA-COMP:11425"/>
        <dbReference type="Rhea" id="RHEA-COMP:11426"/>
        <dbReference type="ChEBI" id="CHEBI:15378"/>
        <dbReference type="ChEBI" id="CHEBI:33019"/>
        <dbReference type="ChEBI" id="CHEBI:43176"/>
        <dbReference type="ChEBI" id="CHEBI:43474"/>
        <dbReference type="ChEBI" id="CHEBI:68546"/>
        <dbReference type="EC" id="2.7.4.28"/>
    </reaction>
</comment>
<comment type="similarity">
    <text evidence="1">Belongs to the pyruvate, phosphate/water dikinase regulatory protein family. PSRP subfamily.</text>
</comment>
<dbReference type="EC" id="2.7.11.33" evidence="1"/>
<dbReference type="EC" id="2.7.4.28" evidence="1"/>
<dbReference type="EMBL" id="CP000076">
    <property type="protein sequence ID" value="AAY91156.1"/>
    <property type="molecule type" value="Genomic_DNA"/>
</dbReference>
<dbReference type="RefSeq" id="WP_011060188.1">
    <property type="nucleotide sequence ID" value="NC_004129.6"/>
</dbReference>
<dbReference type="SMR" id="Q4KFJ6"/>
<dbReference type="STRING" id="220664.PFL_1868"/>
<dbReference type="KEGG" id="pfl:PFL_1868"/>
<dbReference type="PATRIC" id="fig|220664.5.peg.1902"/>
<dbReference type="eggNOG" id="COG1806">
    <property type="taxonomic scope" value="Bacteria"/>
</dbReference>
<dbReference type="HOGENOM" id="CLU_046206_1_0_6"/>
<dbReference type="Proteomes" id="UP000008540">
    <property type="component" value="Chromosome"/>
</dbReference>
<dbReference type="GO" id="GO:0043531">
    <property type="term" value="F:ADP binding"/>
    <property type="evidence" value="ECO:0007669"/>
    <property type="project" value="UniProtKB-UniRule"/>
</dbReference>
<dbReference type="GO" id="GO:0005524">
    <property type="term" value="F:ATP binding"/>
    <property type="evidence" value="ECO:0007669"/>
    <property type="project" value="InterPro"/>
</dbReference>
<dbReference type="GO" id="GO:0016776">
    <property type="term" value="F:phosphotransferase activity, phosphate group as acceptor"/>
    <property type="evidence" value="ECO:0007669"/>
    <property type="project" value="UniProtKB-UniRule"/>
</dbReference>
<dbReference type="GO" id="GO:0004674">
    <property type="term" value="F:protein serine/threonine kinase activity"/>
    <property type="evidence" value="ECO:0007669"/>
    <property type="project" value="UniProtKB-UniRule"/>
</dbReference>
<dbReference type="HAMAP" id="MF_01062">
    <property type="entry name" value="PSRP"/>
    <property type="match status" value="1"/>
</dbReference>
<dbReference type="InterPro" id="IPR005177">
    <property type="entry name" value="Kinase-pyrophosphorylase"/>
</dbReference>
<dbReference type="InterPro" id="IPR026530">
    <property type="entry name" value="PSRP"/>
</dbReference>
<dbReference type="NCBIfam" id="NF003742">
    <property type="entry name" value="PRK05339.1"/>
    <property type="match status" value="1"/>
</dbReference>
<dbReference type="PANTHER" id="PTHR31756">
    <property type="entry name" value="PYRUVATE, PHOSPHATE DIKINASE REGULATORY PROTEIN 1, CHLOROPLASTIC"/>
    <property type="match status" value="1"/>
</dbReference>
<dbReference type="PANTHER" id="PTHR31756:SF3">
    <property type="entry name" value="PYRUVATE, PHOSPHATE DIKINASE REGULATORY PROTEIN 1, CHLOROPLASTIC"/>
    <property type="match status" value="1"/>
</dbReference>
<dbReference type="Pfam" id="PF03618">
    <property type="entry name" value="Kinase-PPPase"/>
    <property type="match status" value="1"/>
</dbReference>
<sequence length="272" mass="31066">MKRSAFFISDGTGITAETLGQSLLAQFENVTFSKFTRPYIDSMEKARAMVQQINIAAEKDGHRPIIFDTIVNQDIREILATSNGFMIDIFSTFLAPLEQELSEHSSYSVGKSHSIGHNSNYMERIEAVNFALDNDDGARTHYYDKADLILVGVSRCGKTPTCLYMAMQFGIRAANYPLTEEDMERLQLPNALRAHKHKLFGLTIDPDRLTAIRNERKPNSRYSSYAQCEFEVREVENLFRRENIPHINSTHFSVEEISAKILVEKGVERRFK</sequence>
<reference key="1">
    <citation type="journal article" date="2005" name="Nat. Biotechnol.">
        <title>Complete genome sequence of the plant commensal Pseudomonas fluorescens Pf-5.</title>
        <authorList>
            <person name="Paulsen I.T."/>
            <person name="Press C.M."/>
            <person name="Ravel J."/>
            <person name="Kobayashi D.Y."/>
            <person name="Myers G.S.A."/>
            <person name="Mavrodi D.V."/>
            <person name="DeBoy R.T."/>
            <person name="Seshadri R."/>
            <person name="Ren Q."/>
            <person name="Madupu R."/>
            <person name="Dodson R.J."/>
            <person name="Durkin A.S."/>
            <person name="Brinkac L.M."/>
            <person name="Daugherty S.C."/>
            <person name="Sullivan S.A."/>
            <person name="Rosovitz M.J."/>
            <person name="Gwinn M.L."/>
            <person name="Zhou L."/>
            <person name="Schneider D.J."/>
            <person name="Cartinhour S.W."/>
            <person name="Nelson W.C."/>
            <person name="Weidman J."/>
            <person name="Watkins K."/>
            <person name="Tran K."/>
            <person name="Khouri H."/>
            <person name="Pierson E.A."/>
            <person name="Pierson L.S. III"/>
            <person name="Thomashow L.S."/>
            <person name="Loper J.E."/>
        </authorList>
    </citation>
    <scope>NUCLEOTIDE SEQUENCE [LARGE SCALE GENOMIC DNA]</scope>
    <source>
        <strain>ATCC BAA-477 / NRRL B-23932 / Pf-5</strain>
    </source>
</reference>
<organism>
    <name type="scientific">Pseudomonas fluorescens (strain ATCC BAA-477 / NRRL B-23932 / Pf-5)</name>
    <dbReference type="NCBI Taxonomy" id="220664"/>
    <lineage>
        <taxon>Bacteria</taxon>
        <taxon>Pseudomonadati</taxon>
        <taxon>Pseudomonadota</taxon>
        <taxon>Gammaproteobacteria</taxon>
        <taxon>Pseudomonadales</taxon>
        <taxon>Pseudomonadaceae</taxon>
        <taxon>Pseudomonas</taxon>
    </lineage>
</organism>
<protein>
    <recommendedName>
        <fullName evidence="1">Putative phosphoenolpyruvate synthase regulatory protein</fullName>
        <shortName evidence="1">PEP synthase regulatory protein</shortName>
        <shortName evidence="1">PSRP</shortName>
        <ecNumber evidence="1">2.7.11.33</ecNumber>
        <ecNumber evidence="1">2.7.4.28</ecNumber>
    </recommendedName>
    <alternativeName>
        <fullName evidence="1">Pyruvate, water dikinase regulatory protein</fullName>
    </alternativeName>
</protein>
<proteinExistence type="inferred from homology"/>